<feature type="chain" id="PRO_0000077378" description="Type II restriction enzyme and methyltransferase RM.BcgI">
    <location>
        <begin position="1"/>
        <end position="637"/>
    </location>
</feature>
<dbReference type="EC" id="3.1.21.4" evidence="2"/>
<dbReference type="EC" id="2.1.1.72" evidence="1"/>
<dbReference type="EMBL" id="L17341">
    <property type="protein sequence ID" value="AAA16626.1"/>
    <property type="molecule type" value="Unassigned_DNA"/>
</dbReference>
<dbReference type="PIR" id="A53125">
    <property type="entry name" value="A53125"/>
</dbReference>
<dbReference type="SMR" id="Q07605"/>
<dbReference type="REBASE" id="238">
    <property type="entry name" value="BcgI"/>
</dbReference>
<dbReference type="PRO" id="PR:Q07605"/>
<dbReference type="GO" id="GO:0003677">
    <property type="term" value="F:DNA binding"/>
    <property type="evidence" value="ECO:0007669"/>
    <property type="project" value="UniProtKB-KW"/>
</dbReference>
<dbReference type="GO" id="GO:0004519">
    <property type="term" value="F:endonuclease activity"/>
    <property type="evidence" value="ECO:0007669"/>
    <property type="project" value="UniProtKB-KW"/>
</dbReference>
<dbReference type="GO" id="GO:0008170">
    <property type="term" value="F:N-methyltransferase activity"/>
    <property type="evidence" value="ECO:0007669"/>
    <property type="project" value="InterPro"/>
</dbReference>
<dbReference type="GO" id="GO:0009007">
    <property type="term" value="F:site-specific DNA-methyltransferase (adenine-specific) activity"/>
    <property type="evidence" value="ECO:0007669"/>
    <property type="project" value="UniProtKB-EC"/>
</dbReference>
<dbReference type="GO" id="GO:0009307">
    <property type="term" value="P:DNA restriction-modification system"/>
    <property type="evidence" value="ECO:0007669"/>
    <property type="project" value="UniProtKB-KW"/>
</dbReference>
<dbReference type="GO" id="GO:0032259">
    <property type="term" value="P:methylation"/>
    <property type="evidence" value="ECO:0007669"/>
    <property type="project" value="UniProtKB-KW"/>
</dbReference>
<dbReference type="CDD" id="cd02440">
    <property type="entry name" value="AdoMet_MTases"/>
    <property type="match status" value="1"/>
</dbReference>
<dbReference type="Gene3D" id="3.40.50.150">
    <property type="entry name" value="Vaccinia Virus protein VP39"/>
    <property type="match status" value="1"/>
</dbReference>
<dbReference type="InterPro" id="IPR051537">
    <property type="entry name" value="DNA_Adenine_Mtase"/>
</dbReference>
<dbReference type="InterPro" id="IPR003356">
    <property type="entry name" value="DNA_methylase_A-5"/>
</dbReference>
<dbReference type="InterPro" id="IPR002052">
    <property type="entry name" value="DNA_methylase_N6_adenine_CS"/>
</dbReference>
<dbReference type="InterPro" id="IPR029063">
    <property type="entry name" value="SAM-dependent_MTases_sf"/>
</dbReference>
<dbReference type="PANTHER" id="PTHR42933:SF1">
    <property type="entry name" value="SITE-SPECIFIC DNA-METHYLTRANSFERASE (ADENINE-SPECIFIC)"/>
    <property type="match status" value="1"/>
</dbReference>
<dbReference type="PANTHER" id="PTHR42933">
    <property type="entry name" value="SLR6095 PROTEIN"/>
    <property type="match status" value="1"/>
</dbReference>
<dbReference type="Pfam" id="PF02384">
    <property type="entry name" value="N6_Mtase"/>
    <property type="match status" value="1"/>
</dbReference>
<dbReference type="PRINTS" id="PR00507">
    <property type="entry name" value="N12N6MTFRASE"/>
</dbReference>
<dbReference type="SUPFAM" id="SSF53335">
    <property type="entry name" value="S-adenosyl-L-methionine-dependent methyltransferases"/>
    <property type="match status" value="1"/>
</dbReference>
<dbReference type="PROSITE" id="PS00092">
    <property type="entry name" value="N6_MTASE"/>
    <property type="match status" value="1"/>
</dbReference>
<gene>
    <name evidence="4" type="primary">bcgIA</name>
</gene>
<comment type="function">
    <text evidence="1 2 3">A B, G, H and S subtype restriction enzyme that recognizes the double-stranded sequence 5'-CGAN(6)TGC-3' and cleaves bilaterally and symmetrically 10 base pairs upstream and 12 base pairs downstream of the sequence to release a 34-base pair fragment. Methylation of the recognition sequence occurs on the adenine in either one or both strands; seems to methylate restricted DNA (PubMed:12654995, PubMed:8276869, PubMed:8451198). This subunit has no methylation or DNA restriction activity on its own (PubMed:8276869).</text>
</comment>
<comment type="catalytic activity">
    <reaction evidence="2">
        <text>Endonucleolytic cleavage of DNA to give specific double-stranded fragments with terminal 5'-phosphates.</text>
        <dbReference type="EC" id="3.1.21.4"/>
    </reaction>
</comment>
<comment type="catalytic activity">
    <reaction evidence="1 2">
        <text>a 2'-deoxyadenosine in DNA + S-adenosyl-L-methionine = an N(6)-methyl-2'-deoxyadenosine in DNA + S-adenosyl-L-homocysteine + H(+)</text>
        <dbReference type="Rhea" id="RHEA:15197"/>
        <dbReference type="Rhea" id="RHEA-COMP:12418"/>
        <dbReference type="Rhea" id="RHEA-COMP:12419"/>
        <dbReference type="ChEBI" id="CHEBI:15378"/>
        <dbReference type="ChEBI" id="CHEBI:57856"/>
        <dbReference type="ChEBI" id="CHEBI:59789"/>
        <dbReference type="ChEBI" id="CHEBI:90615"/>
        <dbReference type="ChEBI" id="CHEBI:90616"/>
        <dbReference type="EC" id="2.1.1.72"/>
    </reaction>
</comment>
<comment type="cofactor">
    <cofactor evidence="2">
        <name>Mg(2+)</name>
        <dbReference type="ChEBI" id="CHEBI:18420"/>
    </cofactor>
</comment>
<comment type="activity regulation">
    <text evidence="2 6">DNA restriction requires S-adenosyl-L-methionine and Mg(2+), and is inhibited by S-adenosyl-homocysteine (PubMed:8451198). SAM may be a cofactor for DNA restriction (Probable).</text>
</comment>
<comment type="subunit">
    <text evidence="1">Heterotrimer of two A and one B subunit. Both subunits are necessary for DNA-binding, which is sequence non-specific.</text>
</comment>
<comment type="similarity">
    <text evidence="5">In the C-terminal section; belongs to the N(4)/N(6)-methyltransferase family.</text>
</comment>
<sequence length="637" mass="71559">MVNEKTSTDQLVRRFIEDLGVTYEEQGSSNIQIKQALRSASKSKSQSGVGKPEFIFFSGNHLIIVEDKLAIDKLEYKNNDGIIDTEFPFRRDYAVNGAVHYARHIIEKTNSYKEVIAIGIAGDGLHYQIHPYFVSETELKKLPEMKSLEDISPENIEEFYKVAVLGELPKEERELREVNKIAADMHEDLRNYGQLEGEKKATVVSAILLALEEPTFSLNQLIGSDRVGGTDGEIIFNAVRVYLENAGIVPYAKVGEMLDQFIFIQRDVTLNTVNSNLEMTPLKYFATTLEAEIMDKIKSNTDFDILGNFYGEFVKYGGNDGNPLGIVLTPRHITSLMAELIGINKSDFVLDPACGTGAFLISAMNRMLGQAENDDERRDIKQNRLYGIEIQQKLFTIATTNMILRGDGKSNLIRDNCLTFDNTIMNGYGINKILMNPPYSQAKNDQTQHLSELSFIQQALEMLVVGGKLCAIVPQSTMVGKNRHDKARKKQILKQHTLETVITLNKDTFHGVGVNPCIVIFKAGIKHPENKRVSFVNFEDDGHVVRKHVGLVGDGTEKGKREHLLAVLAGDEDDGTDLIVKTAIKDTDEWLHSFYYFNDGIPSEDDFYKTVANYLTFQFDMTANGKGYLFEGVEENE</sequence>
<reference key="1">
    <citation type="journal article" date="1994" name="J. Biol. Chem.">
        <title>Characterization of BcgI, a new kind of restriction-modification system.</title>
        <authorList>
            <person name="Kong H."/>
            <person name="Roemer S.E."/>
            <person name="Waite-Rees P.A."/>
            <person name="Benner J.S."/>
            <person name="Wilson G.G."/>
            <person name="Nwankwo D.O."/>
        </authorList>
    </citation>
    <scope>NUCLEOTIDE SEQUENCE [GENOMIC DNA]</scope>
    <scope>PROTEIN SEQUENCE OF 1-14</scope>
    <scope>FUNCTION</scope>
    <scope>CATALYTIC ACTIVITY</scope>
    <scope>SUBUNIT</scope>
    <source>
        <strain>ATCC 55055 / NEB 566</strain>
    </source>
</reference>
<reference key="2">
    <citation type="journal article" date="1993" name="Nucleic Acids Res.">
        <title>A unique restriction endonuclease, BcgI, from Bacillus coagulans.</title>
        <authorList>
            <person name="Kong H."/>
            <person name="Morgan R.D."/>
            <person name="Maunus R.E."/>
            <person name="Schildkraut I."/>
        </authorList>
    </citation>
    <scope>FUNCTION</scope>
    <scope>CATALYTIC ACTIVITY</scope>
    <scope>ACTIVITY REGULATION</scope>
    <scope>COFACTOR</scope>
    <source>
        <strain>ATCC 55055 / NEB 566</strain>
    </source>
</reference>
<reference key="3">
    <citation type="journal article" date="2003" name="Nucleic Acids Res.">
        <title>A nomenclature for restriction enzymes, DNA methyltransferases, homing endonucleases and their genes.</title>
        <authorList>
            <person name="Roberts R.J."/>
            <person name="Belfort M."/>
            <person name="Bestor T."/>
            <person name="Bhagwat A.S."/>
            <person name="Bickle T.A."/>
            <person name="Bitinaite J."/>
            <person name="Blumenthal R.M."/>
            <person name="Degtyarev S.K."/>
            <person name="Dryden D.T."/>
            <person name="Dybvig K."/>
            <person name="Firman K."/>
            <person name="Gromova E.S."/>
            <person name="Gumport R.I."/>
            <person name="Halford S.E."/>
            <person name="Hattman S."/>
            <person name="Heitman J."/>
            <person name="Hornby D.P."/>
            <person name="Janulaitis A."/>
            <person name="Jeltsch A."/>
            <person name="Josephsen J."/>
            <person name="Kiss A."/>
            <person name="Klaenhammer T.R."/>
            <person name="Kobayashi I."/>
            <person name="Kong H."/>
            <person name="Krueger D.H."/>
            <person name="Lacks S."/>
            <person name="Marinus M.G."/>
            <person name="Miyahara M."/>
            <person name="Morgan R.D."/>
            <person name="Murray N.E."/>
            <person name="Nagaraja V."/>
            <person name="Piekarowicz A."/>
            <person name="Pingoud A."/>
            <person name="Raleigh E."/>
            <person name="Rao D.N."/>
            <person name="Reich N."/>
            <person name="Repin V.E."/>
            <person name="Selker E.U."/>
            <person name="Shaw P.C."/>
            <person name="Stein D.C."/>
            <person name="Stoddard B.L."/>
            <person name="Szybalski W."/>
            <person name="Trautner T.A."/>
            <person name="Van Etten J.L."/>
            <person name="Vitor J.M."/>
            <person name="Wilson G.G."/>
            <person name="Xu S.Y."/>
        </authorList>
    </citation>
    <scope>NOMENCLATURE</scope>
    <scope>SUBTYPES</scope>
</reference>
<accession>Q07605</accession>
<name>T4BA_HEYCO</name>
<protein>
    <recommendedName>
        <fullName evidence="3">Type II restriction enzyme and methyltransferase RM.BcgI</fullName>
        <ecNumber evidence="2">3.1.21.4</ecNumber>
    </recommendedName>
    <alternativeName>
        <fullName evidence="4">Restriction enzyme BgcI subunit A</fullName>
    </alternativeName>
    <domain>
        <recommendedName>
            <fullName>Adenine-specific methyltransferase activity</fullName>
            <ecNumber evidence="1">2.1.1.72</ecNumber>
        </recommendedName>
    </domain>
</protein>
<keyword id="KW-0903">Direct protein sequencing</keyword>
<keyword id="KW-0238">DNA-binding</keyword>
<keyword id="KW-0255">Endonuclease</keyword>
<keyword id="KW-0378">Hydrolase</keyword>
<keyword id="KW-0460">Magnesium</keyword>
<keyword id="KW-0489">Methyltransferase</keyword>
<keyword id="KW-0511">Multifunctional enzyme</keyword>
<keyword id="KW-0540">Nuclease</keyword>
<keyword id="KW-0680">Restriction system</keyword>
<keyword id="KW-0949">S-adenosyl-L-methionine</keyword>
<keyword id="KW-0808">Transferase</keyword>
<proteinExistence type="evidence at protein level"/>
<evidence type="ECO:0000269" key="1">
    <source>
    </source>
</evidence>
<evidence type="ECO:0000269" key="2">
    <source>
    </source>
</evidence>
<evidence type="ECO:0000303" key="3">
    <source>
    </source>
</evidence>
<evidence type="ECO:0000303" key="4">
    <source>
    </source>
</evidence>
<evidence type="ECO:0000305" key="5"/>
<evidence type="ECO:0000305" key="6">
    <source>
    </source>
</evidence>
<organism>
    <name type="scientific">Heyndrickxia coagulans</name>
    <name type="common">Weizmannia coagulans</name>
    <dbReference type="NCBI Taxonomy" id="1398"/>
    <lineage>
        <taxon>Bacteria</taxon>
        <taxon>Bacillati</taxon>
        <taxon>Bacillota</taxon>
        <taxon>Bacilli</taxon>
        <taxon>Bacillales</taxon>
        <taxon>Bacillaceae</taxon>
        <taxon>Heyndrickxia</taxon>
    </lineage>
</organism>